<name>Y4546_COLP3</name>
<reference key="1">
    <citation type="journal article" date="2005" name="Proc. Natl. Acad. Sci. U.S.A.">
        <title>The psychrophilic lifestyle as revealed by the genome sequence of Colwellia psychrerythraea 34H through genomic and proteomic analyses.</title>
        <authorList>
            <person name="Methe B.A."/>
            <person name="Nelson K.E."/>
            <person name="Deming J.W."/>
            <person name="Momen B."/>
            <person name="Melamud E."/>
            <person name="Zhang X."/>
            <person name="Moult J."/>
            <person name="Madupu R."/>
            <person name="Nelson W.C."/>
            <person name="Dodson R.J."/>
            <person name="Brinkac L.M."/>
            <person name="Daugherty S.C."/>
            <person name="Durkin A.S."/>
            <person name="DeBoy R.T."/>
            <person name="Kolonay J.F."/>
            <person name="Sullivan S.A."/>
            <person name="Zhou L."/>
            <person name="Davidsen T.M."/>
            <person name="Wu M."/>
            <person name="Huston A.L."/>
            <person name="Lewis M."/>
            <person name="Weaver B."/>
            <person name="Weidman J.F."/>
            <person name="Khouri H."/>
            <person name="Utterback T.R."/>
            <person name="Feldblyum T.V."/>
            <person name="Fraser C.M."/>
        </authorList>
    </citation>
    <scope>NUCLEOTIDE SEQUENCE [LARGE SCALE GENOMIC DNA]</scope>
    <source>
        <strain>34H / ATCC BAA-681</strain>
    </source>
</reference>
<comment type="function">
    <text evidence="1">Displays ATPase and GTPase activities.</text>
</comment>
<comment type="similarity">
    <text evidence="1">Belongs to the RapZ-like family.</text>
</comment>
<keyword id="KW-0067">ATP-binding</keyword>
<keyword id="KW-0342">GTP-binding</keyword>
<keyword id="KW-0547">Nucleotide-binding</keyword>
<dbReference type="EMBL" id="CP000083">
    <property type="protein sequence ID" value="AAZ25340.1"/>
    <property type="molecule type" value="Genomic_DNA"/>
</dbReference>
<dbReference type="SMR" id="Q47VH8"/>
<dbReference type="STRING" id="167879.CPS_4546"/>
<dbReference type="KEGG" id="cps:CPS_4546"/>
<dbReference type="eggNOG" id="COG1660">
    <property type="taxonomic scope" value="Bacteria"/>
</dbReference>
<dbReference type="HOGENOM" id="CLU_059558_1_1_6"/>
<dbReference type="Proteomes" id="UP000000547">
    <property type="component" value="Chromosome"/>
</dbReference>
<dbReference type="GO" id="GO:0005524">
    <property type="term" value="F:ATP binding"/>
    <property type="evidence" value="ECO:0007669"/>
    <property type="project" value="UniProtKB-UniRule"/>
</dbReference>
<dbReference type="GO" id="GO:0005525">
    <property type="term" value="F:GTP binding"/>
    <property type="evidence" value="ECO:0007669"/>
    <property type="project" value="UniProtKB-UniRule"/>
</dbReference>
<dbReference type="Gene3D" id="3.40.50.300">
    <property type="entry name" value="P-loop containing nucleotide triphosphate hydrolases"/>
    <property type="match status" value="1"/>
</dbReference>
<dbReference type="HAMAP" id="MF_00636">
    <property type="entry name" value="RapZ_like"/>
    <property type="match status" value="1"/>
</dbReference>
<dbReference type="InterPro" id="IPR027417">
    <property type="entry name" value="P-loop_NTPase"/>
</dbReference>
<dbReference type="InterPro" id="IPR005337">
    <property type="entry name" value="RapZ-like"/>
</dbReference>
<dbReference type="InterPro" id="IPR053930">
    <property type="entry name" value="RapZ-like_N"/>
</dbReference>
<dbReference type="InterPro" id="IPR053931">
    <property type="entry name" value="RapZ_C"/>
</dbReference>
<dbReference type="NCBIfam" id="NF003828">
    <property type="entry name" value="PRK05416.1"/>
    <property type="match status" value="1"/>
</dbReference>
<dbReference type="PANTHER" id="PTHR30448">
    <property type="entry name" value="RNASE ADAPTER PROTEIN RAPZ"/>
    <property type="match status" value="1"/>
</dbReference>
<dbReference type="PANTHER" id="PTHR30448:SF0">
    <property type="entry name" value="RNASE ADAPTER PROTEIN RAPZ"/>
    <property type="match status" value="1"/>
</dbReference>
<dbReference type="Pfam" id="PF22740">
    <property type="entry name" value="PapZ_C"/>
    <property type="match status" value="1"/>
</dbReference>
<dbReference type="Pfam" id="PF03668">
    <property type="entry name" value="RapZ-like_N"/>
    <property type="match status" value="1"/>
</dbReference>
<dbReference type="PIRSF" id="PIRSF005052">
    <property type="entry name" value="P-loopkin"/>
    <property type="match status" value="1"/>
</dbReference>
<dbReference type="SUPFAM" id="SSF52540">
    <property type="entry name" value="P-loop containing nucleoside triphosphate hydrolases"/>
    <property type="match status" value="1"/>
</dbReference>
<organism>
    <name type="scientific">Colwellia psychrerythraea (strain 34H / ATCC BAA-681)</name>
    <name type="common">Vibrio psychroerythus</name>
    <dbReference type="NCBI Taxonomy" id="167879"/>
    <lineage>
        <taxon>Bacteria</taxon>
        <taxon>Pseudomonadati</taxon>
        <taxon>Pseudomonadota</taxon>
        <taxon>Gammaproteobacteria</taxon>
        <taxon>Alteromonadales</taxon>
        <taxon>Colwelliaceae</taxon>
        <taxon>Colwellia</taxon>
    </lineage>
</organism>
<proteinExistence type="inferred from homology"/>
<accession>Q47VH8</accession>
<evidence type="ECO:0000255" key="1">
    <source>
        <dbReference type="HAMAP-Rule" id="MF_00636"/>
    </source>
</evidence>
<gene>
    <name type="ordered locus">CPS_4546</name>
</gene>
<sequence>MKLIIVSGRSGSGKSVALRVLEDLGYYCVDNIPINLLPALTHTVINDYENVAVSLDVRNLPKDPEDIPEIIAYLPKAVDVNTLFLDADDNDLIRRFSETRRLHPLIKENMALDQAIALEKSLLEPISTNADLYINTSQLSPHQLADLVRERILGKKTGSMVLVFESFGFKHGIPVDADYVFDARFLPNPFWEKSLKGQTGVDQEVKDFLASQAIVTKFIWQINSFMMTWLPHLERNNRSYVTIAIGCTGGKHRSVYIAEMLAKNFRKERDDIQTHHRDIDIKST</sequence>
<feature type="chain" id="PRO_0000258956" description="Nucleotide-binding protein CPS_4546">
    <location>
        <begin position="1"/>
        <end position="284"/>
    </location>
</feature>
<feature type="binding site" evidence="1">
    <location>
        <begin position="8"/>
        <end position="15"/>
    </location>
    <ligand>
        <name>ATP</name>
        <dbReference type="ChEBI" id="CHEBI:30616"/>
    </ligand>
</feature>
<feature type="binding site" evidence="1">
    <location>
        <begin position="56"/>
        <end position="59"/>
    </location>
    <ligand>
        <name>GTP</name>
        <dbReference type="ChEBI" id="CHEBI:37565"/>
    </ligand>
</feature>
<protein>
    <recommendedName>
        <fullName evidence="1">Nucleotide-binding protein CPS_4546</fullName>
    </recommendedName>
</protein>